<feature type="chain" id="PRO_0000178694" description="Probable chromosome-partitioning protein ParB">
    <location>
        <begin position="1"/>
        <end position="310"/>
    </location>
</feature>
<feature type="region of interest" description="Disordered" evidence="2">
    <location>
        <begin position="1"/>
        <end position="35"/>
    </location>
</feature>
<feature type="region of interest" description="Disordered" evidence="2">
    <location>
        <begin position="239"/>
        <end position="259"/>
    </location>
</feature>
<dbReference type="EMBL" id="AE003849">
    <property type="protein sequence ID" value="AAF85080.1"/>
    <property type="molecule type" value="Genomic_DNA"/>
</dbReference>
<dbReference type="PIR" id="H82576">
    <property type="entry name" value="H82576"/>
</dbReference>
<dbReference type="RefSeq" id="WP_010894729.1">
    <property type="nucleotide sequence ID" value="NC_002488.3"/>
</dbReference>
<dbReference type="SMR" id="Q9PB63"/>
<dbReference type="STRING" id="160492.XF_2281"/>
<dbReference type="KEGG" id="xfa:XF_2281"/>
<dbReference type="PATRIC" id="fig|160492.11.peg.2429"/>
<dbReference type="eggNOG" id="COG1475">
    <property type="taxonomic scope" value="Bacteria"/>
</dbReference>
<dbReference type="HOGENOM" id="CLU_023853_0_0_6"/>
<dbReference type="Proteomes" id="UP000000812">
    <property type="component" value="Chromosome"/>
</dbReference>
<dbReference type="GO" id="GO:0005694">
    <property type="term" value="C:chromosome"/>
    <property type="evidence" value="ECO:0007669"/>
    <property type="project" value="TreeGrafter"/>
</dbReference>
<dbReference type="GO" id="GO:0003677">
    <property type="term" value="F:DNA binding"/>
    <property type="evidence" value="ECO:0007669"/>
    <property type="project" value="UniProtKB-KW"/>
</dbReference>
<dbReference type="GO" id="GO:0007059">
    <property type="term" value="P:chromosome segregation"/>
    <property type="evidence" value="ECO:0007669"/>
    <property type="project" value="UniProtKB-KW"/>
</dbReference>
<dbReference type="GO" id="GO:0045881">
    <property type="term" value="P:positive regulation of sporulation resulting in formation of a cellular spore"/>
    <property type="evidence" value="ECO:0007669"/>
    <property type="project" value="TreeGrafter"/>
</dbReference>
<dbReference type="CDD" id="cd16393">
    <property type="entry name" value="SPO0J_N"/>
    <property type="match status" value="1"/>
</dbReference>
<dbReference type="FunFam" id="1.10.10.2830:FF:000001">
    <property type="entry name" value="Chromosome partitioning protein ParB"/>
    <property type="match status" value="1"/>
</dbReference>
<dbReference type="FunFam" id="3.90.1530.30:FF:000001">
    <property type="entry name" value="Chromosome partitioning protein ParB"/>
    <property type="match status" value="1"/>
</dbReference>
<dbReference type="Gene3D" id="1.10.10.2830">
    <property type="match status" value="1"/>
</dbReference>
<dbReference type="Gene3D" id="3.90.1530.30">
    <property type="match status" value="1"/>
</dbReference>
<dbReference type="InterPro" id="IPR050336">
    <property type="entry name" value="Chromosome_partition/occlusion"/>
</dbReference>
<dbReference type="InterPro" id="IPR041468">
    <property type="entry name" value="HTH_ParB/Spo0J"/>
</dbReference>
<dbReference type="InterPro" id="IPR004437">
    <property type="entry name" value="ParB/RepB/Spo0J"/>
</dbReference>
<dbReference type="InterPro" id="IPR003115">
    <property type="entry name" value="ParB/Sulfiredoxin_dom"/>
</dbReference>
<dbReference type="InterPro" id="IPR036086">
    <property type="entry name" value="ParB/Sulfiredoxin_sf"/>
</dbReference>
<dbReference type="InterPro" id="IPR057240">
    <property type="entry name" value="ParB_dimer_C"/>
</dbReference>
<dbReference type="NCBIfam" id="TIGR00180">
    <property type="entry name" value="parB_part"/>
    <property type="match status" value="1"/>
</dbReference>
<dbReference type="PANTHER" id="PTHR33375">
    <property type="entry name" value="CHROMOSOME-PARTITIONING PROTEIN PARB-RELATED"/>
    <property type="match status" value="1"/>
</dbReference>
<dbReference type="PANTHER" id="PTHR33375:SF1">
    <property type="entry name" value="CHROMOSOME-PARTITIONING PROTEIN PARB-RELATED"/>
    <property type="match status" value="1"/>
</dbReference>
<dbReference type="Pfam" id="PF17762">
    <property type="entry name" value="HTH_ParB"/>
    <property type="match status" value="1"/>
</dbReference>
<dbReference type="Pfam" id="PF23552">
    <property type="entry name" value="ParB_dimer"/>
    <property type="match status" value="1"/>
</dbReference>
<dbReference type="Pfam" id="PF02195">
    <property type="entry name" value="ParBc"/>
    <property type="match status" value="1"/>
</dbReference>
<dbReference type="SMART" id="SM00470">
    <property type="entry name" value="ParB"/>
    <property type="match status" value="1"/>
</dbReference>
<dbReference type="SUPFAM" id="SSF110849">
    <property type="entry name" value="ParB/Sulfiredoxin"/>
    <property type="match status" value="1"/>
</dbReference>
<organism>
    <name type="scientific">Xylella fastidiosa (strain 9a5c)</name>
    <dbReference type="NCBI Taxonomy" id="160492"/>
    <lineage>
        <taxon>Bacteria</taxon>
        <taxon>Pseudomonadati</taxon>
        <taxon>Pseudomonadota</taxon>
        <taxon>Gammaproteobacteria</taxon>
        <taxon>Lysobacterales</taxon>
        <taxon>Lysobacteraceae</taxon>
        <taxon>Xylella</taxon>
    </lineage>
</organism>
<protein>
    <recommendedName>
        <fullName>Probable chromosome-partitioning protein ParB</fullName>
    </recommendedName>
</protein>
<evidence type="ECO:0000250" key="1"/>
<evidence type="ECO:0000256" key="2">
    <source>
        <dbReference type="SAM" id="MobiDB-lite"/>
    </source>
</evidence>
<evidence type="ECO:0000305" key="3"/>
<reference key="1">
    <citation type="journal article" date="2000" name="Nature">
        <title>The genome sequence of the plant pathogen Xylella fastidiosa.</title>
        <authorList>
            <person name="Simpson A.J.G."/>
            <person name="Reinach F.C."/>
            <person name="Arruda P."/>
            <person name="Abreu F.A."/>
            <person name="Acencio M."/>
            <person name="Alvarenga R."/>
            <person name="Alves L.M.C."/>
            <person name="Araya J.E."/>
            <person name="Baia G.S."/>
            <person name="Baptista C.S."/>
            <person name="Barros M.H."/>
            <person name="Bonaccorsi E.D."/>
            <person name="Bordin S."/>
            <person name="Bove J.M."/>
            <person name="Briones M.R.S."/>
            <person name="Bueno M.R.P."/>
            <person name="Camargo A.A."/>
            <person name="Camargo L.E.A."/>
            <person name="Carraro D.M."/>
            <person name="Carrer H."/>
            <person name="Colauto N.B."/>
            <person name="Colombo C."/>
            <person name="Costa F.F."/>
            <person name="Costa M.C.R."/>
            <person name="Costa-Neto C.M."/>
            <person name="Coutinho L.L."/>
            <person name="Cristofani M."/>
            <person name="Dias-Neto E."/>
            <person name="Docena C."/>
            <person name="El-Dorry H."/>
            <person name="Facincani A.P."/>
            <person name="Ferreira A.J.S."/>
            <person name="Ferreira V.C.A."/>
            <person name="Ferro J.A."/>
            <person name="Fraga J.S."/>
            <person name="Franca S.C."/>
            <person name="Franco M.C."/>
            <person name="Frohme M."/>
            <person name="Furlan L.R."/>
            <person name="Garnier M."/>
            <person name="Goldman G.H."/>
            <person name="Goldman M.H.S."/>
            <person name="Gomes S.L."/>
            <person name="Gruber A."/>
            <person name="Ho P.L."/>
            <person name="Hoheisel J.D."/>
            <person name="Junqueira M.L."/>
            <person name="Kemper E.L."/>
            <person name="Kitajima J.P."/>
            <person name="Krieger J.E."/>
            <person name="Kuramae E.E."/>
            <person name="Laigret F."/>
            <person name="Lambais M.R."/>
            <person name="Leite L.C.C."/>
            <person name="Lemos E.G.M."/>
            <person name="Lemos M.V.F."/>
            <person name="Lopes S.A."/>
            <person name="Lopes C.R."/>
            <person name="Machado J.A."/>
            <person name="Machado M.A."/>
            <person name="Madeira A.M.B.N."/>
            <person name="Madeira H.M.F."/>
            <person name="Marino C.L."/>
            <person name="Marques M.V."/>
            <person name="Martins E.A.L."/>
            <person name="Martins E.M.F."/>
            <person name="Matsukuma A.Y."/>
            <person name="Menck C.F.M."/>
            <person name="Miracca E.C."/>
            <person name="Miyaki C.Y."/>
            <person name="Monteiro-Vitorello C.B."/>
            <person name="Moon D.H."/>
            <person name="Nagai M.A."/>
            <person name="Nascimento A.L.T.O."/>
            <person name="Netto L.E.S."/>
            <person name="Nhani A. Jr."/>
            <person name="Nobrega F.G."/>
            <person name="Nunes L.R."/>
            <person name="Oliveira M.A."/>
            <person name="de Oliveira M.C."/>
            <person name="de Oliveira R.C."/>
            <person name="Palmieri D.A."/>
            <person name="Paris A."/>
            <person name="Peixoto B.R."/>
            <person name="Pereira G.A.G."/>
            <person name="Pereira H.A. Jr."/>
            <person name="Pesquero J.B."/>
            <person name="Quaggio R.B."/>
            <person name="Roberto P.G."/>
            <person name="Rodrigues V."/>
            <person name="de Rosa A.J.M."/>
            <person name="de Rosa V.E. Jr."/>
            <person name="de Sa R.G."/>
            <person name="Santelli R.V."/>
            <person name="Sawasaki H.E."/>
            <person name="da Silva A.C.R."/>
            <person name="da Silva A.M."/>
            <person name="da Silva F.R."/>
            <person name="Silva W.A. Jr."/>
            <person name="da Silveira J.F."/>
            <person name="Silvestri M.L.Z."/>
            <person name="Siqueira W.J."/>
            <person name="de Souza A.A."/>
            <person name="de Souza A.P."/>
            <person name="Terenzi M.F."/>
            <person name="Truffi D."/>
            <person name="Tsai S.M."/>
            <person name="Tsuhako M.H."/>
            <person name="Vallada H."/>
            <person name="Van Sluys M.A."/>
            <person name="Verjovski-Almeida S."/>
            <person name="Vettore A.L."/>
            <person name="Zago M.A."/>
            <person name="Zatz M."/>
            <person name="Meidanis J."/>
            <person name="Setubal J.C."/>
        </authorList>
    </citation>
    <scope>NUCLEOTIDE SEQUENCE [LARGE SCALE GENOMIC DNA]</scope>
    <source>
        <strain>9a5c</strain>
    </source>
</reference>
<accession>Q9PB63</accession>
<keyword id="KW-0159">Chromosome partition</keyword>
<keyword id="KW-0238">DNA-binding</keyword>
<comment type="function">
    <text evidence="1">Involved in chromosome partition. Localize to both poles of the predivisional cell following completion of DNA replication. Binds to the DNA origin of replication (By similarity).</text>
</comment>
<comment type="similarity">
    <text evidence="3">Belongs to the ParB family.</text>
</comment>
<name>PARB_XYLFA</name>
<gene>
    <name type="primary">parB</name>
    <name type="ordered locus">XF_2281</name>
</gene>
<sequence length="310" mass="33911">MNKPSPPLKKRGLGRGLEALLGSKGGSSVPPTVAEGQLPGEVLRTLQITQLQPSKYQPRREMSEPKLAELADSIKAQGVIQPIIVRELDVDMFEIVAGERRWRASQLAGLTEVPVLVRELDDRTVVAMALIENIQREDLNPLEEAQALQRLIDEFSLTHAEAAEAVGRSRAAVSNLLRLLELPLGIRTLLQSRRLEMGHARALLTLAPELADKLAKEAADQGWSVREVEHRAQQFAAGKVPDIRDKKSKSPASAPAQPDIASLETELSEHLGTKVAINHGRAGKGKLVIHYTDLDVLDGVLERLRARVAD</sequence>
<proteinExistence type="inferred from homology"/>